<organism>
    <name type="scientific">Vitis vinifera</name>
    <name type="common">Grape</name>
    <dbReference type="NCBI Taxonomy" id="29760"/>
    <lineage>
        <taxon>Eukaryota</taxon>
        <taxon>Viridiplantae</taxon>
        <taxon>Streptophyta</taxon>
        <taxon>Embryophyta</taxon>
        <taxon>Tracheophyta</taxon>
        <taxon>Spermatophyta</taxon>
        <taxon>Magnoliopsida</taxon>
        <taxon>eudicotyledons</taxon>
        <taxon>Gunneridae</taxon>
        <taxon>Pentapetalae</taxon>
        <taxon>rosids</taxon>
        <taxon>Vitales</taxon>
        <taxon>Vitaceae</taxon>
        <taxon>Viteae</taxon>
        <taxon>Vitis</taxon>
    </lineage>
</organism>
<comment type="function">
    <text evidence="1">One of the components of the core complex of photosystem II (PSII). PSII is a light-driven water:plastoquinone oxidoreductase that uses light energy to abstract electrons from H(2)O, generating O(2) and a proton gradient subsequently used for ATP formation. It consists of a core antenna complex that captures photons, and an electron transfer chain that converts photonic excitation into a charge separation.</text>
</comment>
<comment type="subunit">
    <text evidence="1">PSII is composed of 1 copy each of membrane proteins PsbA, PsbB, PsbC, PsbD, PsbE, PsbF, PsbH, PsbI, PsbJ, PsbK, PsbL, PsbM, PsbT, PsbX, PsbY, PsbZ, Psb30/Ycf12, at least 3 peripheral proteins of the oxygen-evolving complex and a large number of cofactors. It forms dimeric complexes.</text>
</comment>
<comment type="subcellular location">
    <subcellularLocation>
        <location evidence="1">Plastid</location>
        <location evidence="1">Chloroplast thylakoid membrane</location>
        <topology evidence="1">Single-pass membrane protein</topology>
    </subcellularLocation>
</comment>
<comment type="similarity">
    <text evidence="1">Belongs to the PsbK family.</text>
</comment>
<gene>
    <name evidence="1" type="primary">psbK</name>
</gene>
<reference key="1">
    <citation type="journal article" date="2006" name="BMC Evol. Biol.">
        <title>Phylogenetic analyses of Vitis (Vitaceae) based on complete chloroplast genome sequences: effects of taxon sampling and phylogenetic methods on resolving relationships among rosids.</title>
        <authorList>
            <person name="Jansen R.K."/>
            <person name="Kaittanis C."/>
            <person name="Lee S.-B."/>
            <person name="Saski C."/>
            <person name="Tomkins J."/>
            <person name="Alverson A.J."/>
            <person name="Daniell H."/>
        </authorList>
    </citation>
    <scope>NUCLEOTIDE SEQUENCE [LARGE SCALE GENOMIC DNA]</scope>
    <source>
        <strain>cv. Maxxa</strain>
    </source>
</reference>
<keyword id="KW-0150">Chloroplast</keyword>
<keyword id="KW-0472">Membrane</keyword>
<keyword id="KW-0602">Photosynthesis</keyword>
<keyword id="KW-0604">Photosystem II</keyword>
<keyword id="KW-0934">Plastid</keyword>
<keyword id="KW-0674">Reaction center</keyword>
<keyword id="KW-1185">Reference proteome</keyword>
<keyword id="KW-0793">Thylakoid</keyword>
<keyword id="KW-0812">Transmembrane</keyword>
<keyword id="KW-1133">Transmembrane helix</keyword>
<protein>
    <recommendedName>
        <fullName evidence="1">Photosystem II reaction center protein K</fullName>
        <shortName evidence="1">PSII-K</shortName>
    </recommendedName>
</protein>
<dbReference type="EMBL" id="DQ424856">
    <property type="protein sequence ID" value="ABE47517.1"/>
    <property type="molecule type" value="Genomic_DNA"/>
</dbReference>
<dbReference type="RefSeq" id="YP_567059.1">
    <property type="nucleotide sequence ID" value="NC_007957.1"/>
</dbReference>
<dbReference type="SMR" id="Q0ZJ37"/>
<dbReference type="FunCoup" id="Q0ZJ37">
    <property type="interactions" value="60"/>
</dbReference>
<dbReference type="STRING" id="29760.Q0ZJ37"/>
<dbReference type="GeneID" id="4025108"/>
<dbReference type="KEGG" id="vvi:4025108"/>
<dbReference type="InParanoid" id="Q0ZJ37"/>
<dbReference type="OrthoDB" id="864701at71240"/>
<dbReference type="Proteomes" id="UP000009183">
    <property type="component" value="Chloroplast"/>
</dbReference>
<dbReference type="GO" id="GO:0009535">
    <property type="term" value="C:chloroplast thylakoid membrane"/>
    <property type="evidence" value="ECO:0007669"/>
    <property type="project" value="UniProtKB-SubCell"/>
</dbReference>
<dbReference type="GO" id="GO:0009539">
    <property type="term" value="C:photosystem II reaction center"/>
    <property type="evidence" value="ECO:0007669"/>
    <property type="project" value="InterPro"/>
</dbReference>
<dbReference type="GO" id="GO:0015979">
    <property type="term" value="P:photosynthesis"/>
    <property type="evidence" value="ECO:0007669"/>
    <property type="project" value="UniProtKB-UniRule"/>
</dbReference>
<dbReference type="HAMAP" id="MF_00441">
    <property type="entry name" value="PSII_PsbK"/>
    <property type="match status" value="1"/>
</dbReference>
<dbReference type="InterPro" id="IPR003687">
    <property type="entry name" value="PSII_PsbK"/>
</dbReference>
<dbReference type="InterPro" id="IPR037270">
    <property type="entry name" value="PSII_PsbK_sf"/>
</dbReference>
<dbReference type="NCBIfam" id="NF002715">
    <property type="entry name" value="PRK02553.1"/>
    <property type="match status" value="1"/>
</dbReference>
<dbReference type="PANTHER" id="PTHR35325">
    <property type="match status" value="1"/>
</dbReference>
<dbReference type="PANTHER" id="PTHR35325:SF1">
    <property type="entry name" value="PHOTOSYSTEM II REACTION CENTER PROTEIN K"/>
    <property type="match status" value="1"/>
</dbReference>
<dbReference type="Pfam" id="PF02533">
    <property type="entry name" value="PsbK"/>
    <property type="match status" value="1"/>
</dbReference>
<dbReference type="SUPFAM" id="SSF161037">
    <property type="entry name" value="Photosystem II reaction center protein K, PsbK"/>
    <property type="match status" value="1"/>
</dbReference>
<evidence type="ECO:0000255" key="1">
    <source>
        <dbReference type="HAMAP-Rule" id="MF_00441"/>
    </source>
</evidence>
<name>PSBK_VITVI</name>
<accession>Q0ZJ37</accession>
<sequence length="61" mass="6985">MLNIFSLICICLNSALYSSNFFFAKLPEAYAFLNPIVDVMPVIPLFFFLLAFVWQAAVSFR</sequence>
<geneLocation type="chloroplast"/>
<feature type="propeptide" id="PRO_0000276188" evidence="1">
    <location>
        <begin position="1"/>
        <end position="24"/>
    </location>
</feature>
<feature type="chain" id="PRO_0000276189" description="Photosystem II reaction center protein K" evidence="1">
    <location>
        <begin position="25"/>
        <end position="61"/>
    </location>
</feature>
<feature type="transmembrane region" description="Helical" evidence="1">
    <location>
        <begin position="40"/>
        <end position="60"/>
    </location>
</feature>
<proteinExistence type="inferred from homology"/>